<organism>
    <name type="scientific">Autographa californica nuclear polyhedrosis virus</name>
    <name type="common">AcMNPV</name>
    <dbReference type="NCBI Taxonomy" id="46015"/>
    <lineage>
        <taxon>Viruses</taxon>
        <taxon>Viruses incertae sedis</taxon>
        <taxon>Naldaviricetes</taxon>
        <taxon>Lefavirales</taxon>
        <taxon>Baculoviridae</taxon>
        <taxon>Alphabaculovirus</taxon>
        <taxon>Alphabaculovirus aucalifornicae</taxon>
    </lineage>
</organism>
<protein>
    <recommendedName>
        <fullName>Uncharacterized 11.0 kDa protein in HE65-PK2 intergenic region</fullName>
    </recommendedName>
</protein>
<reference key="1">
    <citation type="journal article" date="1994" name="Virology">
        <title>The complete DNA sequence of Autographa californica nuclear polyhedrosis virus.</title>
        <authorList>
            <person name="Ayres M.D."/>
            <person name="Howard S.C."/>
            <person name="Kuzio J."/>
            <person name="Lopez-Ferber M."/>
            <person name="Possee R.D."/>
        </authorList>
    </citation>
    <scope>NUCLEOTIDE SEQUENCE [LARGE SCALE GENOMIC DNA]</scope>
    <source>
        <strain>C6</strain>
    </source>
</reference>
<keyword id="KW-1185">Reference proteome</keyword>
<dbReference type="EMBL" id="L22858">
    <property type="protein sequence ID" value="AAA66747.1"/>
    <property type="molecule type" value="Genomic_DNA"/>
</dbReference>
<dbReference type="PIR" id="F72864">
    <property type="entry name" value="F72864"/>
</dbReference>
<dbReference type="RefSeq" id="NP_054147.1">
    <property type="nucleotide sequence ID" value="NC_001623.1"/>
</dbReference>
<dbReference type="GeneID" id="1403950"/>
<dbReference type="KEGG" id="vg:1403950"/>
<dbReference type="OrthoDB" id="20453at10239"/>
<dbReference type="Proteomes" id="UP000008292">
    <property type="component" value="Segment"/>
</dbReference>
<dbReference type="InterPro" id="IPR012428">
    <property type="entry name" value="AcMNPV_Orf117"/>
</dbReference>
<dbReference type="Pfam" id="PF07785">
    <property type="entry name" value="DUF1623"/>
    <property type="match status" value="1"/>
</dbReference>
<name>Y117_NPVAC</name>
<feature type="chain" id="PRO_0000133056" description="Uncharacterized 11.0 kDa protein in HE65-PK2 intergenic region">
    <location>
        <begin position="1"/>
        <end position="95"/>
    </location>
</feature>
<accession>P41670</accession>
<sequence length="95" mass="10992">MHLTANVLLVPNALKKRDVKYIYNTYLKNYSVIEGVMCCNGDCLAVVVLDRNQLQNTDMEVLESLEYTSDNIELLCEKICVIVDNYDKYYQKNCV</sequence>
<organismHost>
    <name type="scientific">Lepidoptera</name>
    <name type="common">butterflies and moths</name>
    <dbReference type="NCBI Taxonomy" id="7088"/>
</organismHost>
<proteinExistence type="predicted"/>